<proteinExistence type="inferred from homology"/>
<dbReference type="EC" id="6.3.3.3" evidence="1"/>
<dbReference type="EMBL" id="CP000608">
    <property type="protein sequence ID" value="ABO47478.1"/>
    <property type="molecule type" value="Genomic_DNA"/>
</dbReference>
<dbReference type="RefSeq" id="WP_003020969.1">
    <property type="nucleotide sequence ID" value="NC_009257.1"/>
</dbReference>
<dbReference type="SMR" id="A4IXP2"/>
<dbReference type="KEGG" id="ftw:FTW_2081"/>
<dbReference type="HOGENOM" id="CLU_072551_0_0_6"/>
<dbReference type="UniPathway" id="UPA00078">
    <property type="reaction ID" value="UER00161"/>
</dbReference>
<dbReference type="GO" id="GO:0005829">
    <property type="term" value="C:cytosol"/>
    <property type="evidence" value="ECO:0007669"/>
    <property type="project" value="TreeGrafter"/>
</dbReference>
<dbReference type="GO" id="GO:0005524">
    <property type="term" value="F:ATP binding"/>
    <property type="evidence" value="ECO:0007669"/>
    <property type="project" value="UniProtKB-UniRule"/>
</dbReference>
<dbReference type="GO" id="GO:0004141">
    <property type="term" value="F:dethiobiotin synthase activity"/>
    <property type="evidence" value="ECO:0007669"/>
    <property type="project" value="UniProtKB-UniRule"/>
</dbReference>
<dbReference type="GO" id="GO:0000287">
    <property type="term" value="F:magnesium ion binding"/>
    <property type="evidence" value="ECO:0007669"/>
    <property type="project" value="UniProtKB-UniRule"/>
</dbReference>
<dbReference type="GO" id="GO:0009102">
    <property type="term" value="P:biotin biosynthetic process"/>
    <property type="evidence" value="ECO:0007669"/>
    <property type="project" value="UniProtKB-UniRule"/>
</dbReference>
<dbReference type="CDD" id="cd03109">
    <property type="entry name" value="DTBS"/>
    <property type="match status" value="1"/>
</dbReference>
<dbReference type="FunFam" id="3.40.50.300:FF:002404">
    <property type="entry name" value="ATP-dependent dethiobiotin synthetase BioD"/>
    <property type="match status" value="1"/>
</dbReference>
<dbReference type="Gene3D" id="3.40.50.300">
    <property type="entry name" value="P-loop containing nucleotide triphosphate hydrolases"/>
    <property type="match status" value="1"/>
</dbReference>
<dbReference type="HAMAP" id="MF_00336">
    <property type="entry name" value="BioD"/>
    <property type="match status" value="1"/>
</dbReference>
<dbReference type="InterPro" id="IPR004472">
    <property type="entry name" value="DTB_synth_BioD"/>
</dbReference>
<dbReference type="InterPro" id="IPR027417">
    <property type="entry name" value="P-loop_NTPase"/>
</dbReference>
<dbReference type="NCBIfam" id="TIGR00347">
    <property type="entry name" value="bioD"/>
    <property type="match status" value="1"/>
</dbReference>
<dbReference type="PANTHER" id="PTHR43210">
    <property type="entry name" value="DETHIOBIOTIN SYNTHETASE"/>
    <property type="match status" value="1"/>
</dbReference>
<dbReference type="PANTHER" id="PTHR43210:SF5">
    <property type="entry name" value="DETHIOBIOTIN SYNTHETASE"/>
    <property type="match status" value="1"/>
</dbReference>
<dbReference type="Pfam" id="PF13500">
    <property type="entry name" value="AAA_26"/>
    <property type="match status" value="1"/>
</dbReference>
<dbReference type="PIRSF" id="PIRSF006755">
    <property type="entry name" value="DTB_synth"/>
    <property type="match status" value="1"/>
</dbReference>
<dbReference type="SUPFAM" id="SSF52540">
    <property type="entry name" value="P-loop containing nucleoside triphosphate hydrolases"/>
    <property type="match status" value="1"/>
</dbReference>
<name>BIOD_FRATW</name>
<evidence type="ECO:0000255" key="1">
    <source>
        <dbReference type="HAMAP-Rule" id="MF_00336"/>
    </source>
</evidence>
<gene>
    <name evidence="1" type="primary">bioD</name>
    <name type="ordered locus">FTW_2081</name>
</gene>
<accession>A4IXP2</accession>
<feature type="chain" id="PRO_0000302510" description="ATP-dependent dethiobiotin synthetase BioD">
    <location>
        <begin position="1"/>
        <end position="225"/>
    </location>
</feature>
<feature type="active site" evidence="1">
    <location>
        <position position="37"/>
    </location>
</feature>
<feature type="binding site" evidence="1">
    <location>
        <begin position="12"/>
        <end position="17"/>
    </location>
    <ligand>
        <name>ATP</name>
        <dbReference type="ChEBI" id="CHEBI:30616"/>
    </ligand>
</feature>
<feature type="binding site" evidence="1">
    <location>
        <position position="16"/>
    </location>
    <ligand>
        <name>Mg(2+)</name>
        <dbReference type="ChEBI" id="CHEBI:18420"/>
    </ligand>
</feature>
<feature type="binding site" evidence="1">
    <location>
        <position position="41"/>
    </location>
    <ligand>
        <name>substrate</name>
    </ligand>
</feature>
<feature type="binding site" evidence="1">
    <location>
        <position position="52"/>
    </location>
    <ligand>
        <name>ATP</name>
        <dbReference type="ChEBI" id="CHEBI:30616"/>
    </ligand>
</feature>
<feature type="binding site" evidence="1">
    <location>
        <position position="52"/>
    </location>
    <ligand>
        <name>Mg(2+)</name>
        <dbReference type="ChEBI" id="CHEBI:18420"/>
    </ligand>
</feature>
<feature type="binding site" evidence="1">
    <location>
        <begin position="114"/>
        <end position="117"/>
    </location>
    <ligand>
        <name>ATP</name>
        <dbReference type="ChEBI" id="CHEBI:30616"/>
    </ligand>
</feature>
<feature type="binding site" evidence="1">
    <location>
        <position position="114"/>
    </location>
    <ligand>
        <name>Mg(2+)</name>
        <dbReference type="ChEBI" id="CHEBI:18420"/>
    </ligand>
</feature>
<feature type="binding site" evidence="1">
    <location>
        <begin position="174"/>
        <end position="175"/>
    </location>
    <ligand>
        <name>ATP</name>
        <dbReference type="ChEBI" id="CHEBI:30616"/>
    </ligand>
</feature>
<protein>
    <recommendedName>
        <fullName evidence="1">ATP-dependent dethiobiotin synthetase BioD</fullName>
        <ecNumber evidence="1">6.3.3.3</ecNumber>
    </recommendedName>
    <alternativeName>
        <fullName evidence="1">DTB synthetase</fullName>
        <shortName evidence="1">DTBS</shortName>
    </alternativeName>
    <alternativeName>
        <fullName evidence="1">Dethiobiotin synthase</fullName>
    </alternativeName>
</protein>
<keyword id="KW-0067">ATP-binding</keyword>
<keyword id="KW-0093">Biotin biosynthesis</keyword>
<keyword id="KW-0963">Cytoplasm</keyword>
<keyword id="KW-0436">Ligase</keyword>
<keyword id="KW-0460">Magnesium</keyword>
<keyword id="KW-0479">Metal-binding</keyword>
<keyword id="KW-0547">Nucleotide-binding</keyword>
<organism>
    <name type="scientific">Francisella tularensis subsp. tularensis (strain WY96-3418)</name>
    <dbReference type="NCBI Taxonomy" id="418136"/>
    <lineage>
        <taxon>Bacteria</taxon>
        <taxon>Pseudomonadati</taxon>
        <taxon>Pseudomonadota</taxon>
        <taxon>Gammaproteobacteria</taxon>
        <taxon>Thiotrichales</taxon>
        <taxon>Francisellaceae</taxon>
        <taxon>Francisella</taxon>
    </lineage>
</organism>
<reference key="1">
    <citation type="journal article" date="2007" name="PLoS ONE">
        <title>Complete genomic characterization of a pathogenic A.II strain of Francisella tularensis subspecies tularensis.</title>
        <authorList>
            <person name="Beckstrom-Sternberg S.M."/>
            <person name="Auerbach R.K."/>
            <person name="Godbole S."/>
            <person name="Pearson J.V."/>
            <person name="Beckstrom-Sternberg J.S."/>
            <person name="Deng Z."/>
            <person name="Munk C."/>
            <person name="Kubota K."/>
            <person name="Zhou Y."/>
            <person name="Bruce D."/>
            <person name="Noronha J."/>
            <person name="Scheuermann R.H."/>
            <person name="Wang A."/>
            <person name="Wei X."/>
            <person name="Wang J."/>
            <person name="Hao J."/>
            <person name="Wagner D.M."/>
            <person name="Brettin T.S."/>
            <person name="Brown N."/>
            <person name="Gilna P."/>
            <person name="Keim P.S."/>
        </authorList>
    </citation>
    <scope>NUCLEOTIDE SEQUENCE [LARGE SCALE GENOMIC DNA]</scope>
    <source>
        <strain>WY96-3418</strain>
    </source>
</reference>
<sequence>MKKFFIIGTDTEVGKTYISTKLIEVCEHQNIKSLCLKPVASGQSQFSELCEDVESILNAYKHKFTAAEINLISFNQAVAPHIIAAKTKVDISIENLKQFIEDKYNQDLDILFIEGAGGLLTPYSDHTTQLDLIKALQIPVLLVSAIKVGCINHTLLTINELNRHNIKLAGWIANCNDSNIKYIDEQINTIEELSGYKCSAKISRNADYLDFIDLSKILISPEENE</sequence>
<comment type="function">
    <text evidence="1">Catalyzes a mechanistically unusual reaction, the ATP-dependent insertion of CO2 between the N7 and N8 nitrogen atoms of 7,8-diaminopelargonic acid (DAPA, also called 7,8-diammoniononanoate) to form a ureido ring.</text>
</comment>
<comment type="catalytic activity">
    <reaction evidence="1">
        <text>(7R,8S)-7,8-diammoniononanoate + CO2 + ATP = (4R,5S)-dethiobiotin + ADP + phosphate + 3 H(+)</text>
        <dbReference type="Rhea" id="RHEA:15805"/>
        <dbReference type="ChEBI" id="CHEBI:15378"/>
        <dbReference type="ChEBI" id="CHEBI:16526"/>
        <dbReference type="ChEBI" id="CHEBI:30616"/>
        <dbReference type="ChEBI" id="CHEBI:43474"/>
        <dbReference type="ChEBI" id="CHEBI:149469"/>
        <dbReference type="ChEBI" id="CHEBI:149473"/>
        <dbReference type="ChEBI" id="CHEBI:456216"/>
        <dbReference type="EC" id="6.3.3.3"/>
    </reaction>
</comment>
<comment type="cofactor">
    <cofactor evidence="1">
        <name>Mg(2+)</name>
        <dbReference type="ChEBI" id="CHEBI:18420"/>
    </cofactor>
</comment>
<comment type="pathway">
    <text evidence="1">Cofactor biosynthesis; biotin biosynthesis; biotin from 7,8-diaminononanoate: step 1/2.</text>
</comment>
<comment type="subunit">
    <text evidence="1">Homodimer.</text>
</comment>
<comment type="subcellular location">
    <subcellularLocation>
        <location evidence="1">Cytoplasm</location>
    </subcellularLocation>
</comment>
<comment type="similarity">
    <text evidence="1">Belongs to the dethiobiotin synthetase family.</text>
</comment>